<proteinExistence type="predicted"/>
<reference key="1">
    <citation type="journal article" date="2002" name="Nature">
        <title>The genome sequence of Schizosaccharomyces pombe.</title>
        <authorList>
            <person name="Wood V."/>
            <person name="Gwilliam R."/>
            <person name="Rajandream M.A."/>
            <person name="Lyne M.H."/>
            <person name="Lyne R."/>
            <person name="Stewart A."/>
            <person name="Sgouros J.G."/>
            <person name="Peat N."/>
            <person name="Hayles J."/>
            <person name="Baker S.G."/>
            <person name="Basham D."/>
            <person name="Bowman S."/>
            <person name="Brooks K."/>
            <person name="Brown D."/>
            <person name="Brown S."/>
            <person name="Chillingworth T."/>
            <person name="Churcher C.M."/>
            <person name="Collins M."/>
            <person name="Connor R."/>
            <person name="Cronin A."/>
            <person name="Davis P."/>
            <person name="Feltwell T."/>
            <person name="Fraser A."/>
            <person name="Gentles S."/>
            <person name="Goble A."/>
            <person name="Hamlin N."/>
            <person name="Harris D.E."/>
            <person name="Hidalgo J."/>
            <person name="Hodgson G."/>
            <person name="Holroyd S."/>
            <person name="Hornsby T."/>
            <person name="Howarth S."/>
            <person name="Huckle E.J."/>
            <person name="Hunt S."/>
            <person name="Jagels K."/>
            <person name="James K.D."/>
            <person name="Jones L."/>
            <person name="Jones M."/>
            <person name="Leather S."/>
            <person name="McDonald S."/>
            <person name="McLean J."/>
            <person name="Mooney P."/>
            <person name="Moule S."/>
            <person name="Mungall K.L."/>
            <person name="Murphy L.D."/>
            <person name="Niblett D."/>
            <person name="Odell C."/>
            <person name="Oliver K."/>
            <person name="O'Neil S."/>
            <person name="Pearson D."/>
            <person name="Quail M.A."/>
            <person name="Rabbinowitsch E."/>
            <person name="Rutherford K.M."/>
            <person name="Rutter S."/>
            <person name="Saunders D."/>
            <person name="Seeger K."/>
            <person name="Sharp S."/>
            <person name="Skelton J."/>
            <person name="Simmonds M.N."/>
            <person name="Squares R."/>
            <person name="Squares S."/>
            <person name="Stevens K."/>
            <person name="Taylor K."/>
            <person name="Taylor R.G."/>
            <person name="Tivey A."/>
            <person name="Walsh S.V."/>
            <person name="Warren T."/>
            <person name="Whitehead S."/>
            <person name="Woodward J.R."/>
            <person name="Volckaert G."/>
            <person name="Aert R."/>
            <person name="Robben J."/>
            <person name="Grymonprez B."/>
            <person name="Weltjens I."/>
            <person name="Vanstreels E."/>
            <person name="Rieger M."/>
            <person name="Schaefer M."/>
            <person name="Mueller-Auer S."/>
            <person name="Gabel C."/>
            <person name="Fuchs M."/>
            <person name="Duesterhoeft A."/>
            <person name="Fritzc C."/>
            <person name="Holzer E."/>
            <person name="Moestl D."/>
            <person name="Hilbert H."/>
            <person name="Borzym K."/>
            <person name="Langer I."/>
            <person name="Beck A."/>
            <person name="Lehrach H."/>
            <person name="Reinhardt R."/>
            <person name="Pohl T.M."/>
            <person name="Eger P."/>
            <person name="Zimmermann W."/>
            <person name="Wedler H."/>
            <person name="Wambutt R."/>
            <person name="Purnelle B."/>
            <person name="Goffeau A."/>
            <person name="Cadieu E."/>
            <person name="Dreano S."/>
            <person name="Gloux S."/>
            <person name="Lelaure V."/>
            <person name="Mottier S."/>
            <person name="Galibert F."/>
            <person name="Aves S.J."/>
            <person name="Xiang Z."/>
            <person name="Hunt C."/>
            <person name="Moore K."/>
            <person name="Hurst S.M."/>
            <person name="Lucas M."/>
            <person name="Rochet M."/>
            <person name="Gaillardin C."/>
            <person name="Tallada V.A."/>
            <person name="Garzon A."/>
            <person name="Thode G."/>
            <person name="Daga R.R."/>
            <person name="Cruzado L."/>
            <person name="Jimenez J."/>
            <person name="Sanchez M."/>
            <person name="del Rey F."/>
            <person name="Benito J."/>
            <person name="Dominguez A."/>
            <person name="Revuelta J.L."/>
            <person name="Moreno S."/>
            <person name="Armstrong J."/>
            <person name="Forsburg S.L."/>
            <person name="Cerutti L."/>
            <person name="Lowe T."/>
            <person name="McCombie W.R."/>
            <person name="Paulsen I."/>
            <person name="Potashkin J."/>
            <person name="Shpakovski G.V."/>
            <person name="Ussery D."/>
            <person name="Barrell B.G."/>
            <person name="Nurse P."/>
        </authorList>
    </citation>
    <scope>NUCLEOTIDE SEQUENCE [LARGE SCALE GENOMIC DNA]</scope>
    <source>
        <strain>972 / ATCC 24843</strain>
    </source>
</reference>
<reference key="2">
    <citation type="journal article" date="2011" name="Science">
        <title>Comparative functional genomics of the fission yeasts.</title>
        <authorList>
            <person name="Rhind N."/>
            <person name="Chen Z."/>
            <person name="Yassour M."/>
            <person name="Thompson D.A."/>
            <person name="Haas B.J."/>
            <person name="Habib N."/>
            <person name="Wapinski I."/>
            <person name="Roy S."/>
            <person name="Lin M.F."/>
            <person name="Heiman D.I."/>
            <person name="Young S.K."/>
            <person name="Furuya K."/>
            <person name="Guo Y."/>
            <person name="Pidoux A."/>
            <person name="Chen H.M."/>
            <person name="Robbertse B."/>
            <person name="Goldberg J.M."/>
            <person name="Aoki K."/>
            <person name="Bayne E.H."/>
            <person name="Berlin A.M."/>
            <person name="Desjardins C.A."/>
            <person name="Dobbs E."/>
            <person name="Dukaj L."/>
            <person name="Fan L."/>
            <person name="FitzGerald M.G."/>
            <person name="French C."/>
            <person name="Gujja S."/>
            <person name="Hansen K."/>
            <person name="Keifenheim D."/>
            <person name="Levin J.Z."/>
            <person name="Mosher R.A."/>
            <person name="Mueller C.A."/>
            <person name="Pfiffner J."/>
            <person name="Priest M."/>
            <person name="Russ C."/>
            <person name="Smialowska A."/>
            <person name="Swoboda P."/>
            <person name="Sykes S.M."/>
            <person name="Vaughn M."/>
            <person name="Vengrova S."/>
            <person name="Yoder R."/>
            <person name="Zeng Q."/>
            <person name="Allshire R."/>
            <person name="Baulcombe D."/>
            <person name="Birren B.W."/>
            <person name="Brown W."/>
            <person name="Ekwall K."/>
            <person name="Kellis M."/>
            <person name="Leatherwood J."/>
            <person name="Levin H."/>
            <person name="Margalit H."/>
            <person name="Martienssen R."/>
            <person name="Nieduszynski C.A."/>
            <person name="Spatafora J.W."/>
            <person name="Friedman N."/>
            <person name="Dalgaard J.Z."/>
            <person name="Baumann P."/>
            <person name="Niki H."/>
            <person name="Regev A."/>
            <person name="Nusbaum C."/>
        </authorList>
    </citation>
    <scope>IDENTIFICATION</scope>
</reference>
<feature type="chain" id="PRO_0000416635" description="Putative uncharacterized protein C1685.17">
    <location>
        <begin position="1"/>
        <end position="81"/>
    </location>
</feature>
<accession>G2TRS0</accession>
<organism>
    <name type="scientific">Schizosaccharomyces pombe (strain 972 / ATCC 24843)</name>
    <name type="common">Fission yeast</name>
    <dbReference type="NCBI Taxonomy" id="284812"/>
    <lineage>
        <taxon>Eukaryota</taxon>
        <taxon>Fungi</taxon>
        <taxon>Dikarya</taxon>
        <taxon>Ascomycota</taxon>
        <taxon>Taphrinomycotina</taxon>
        <taxon>Schizosaccharomycetes</taxon>
        <taxon>Schizosaccharomycetales</taxon>
        <taxon>Schizosaccharomycetaceae</taxon>
        <taxon>Schizosaccharomyces</taxon>
    </lineage>
</organism>
<dbReference type="EMBL" id="CU329671">
    <property type="protein sequence ID" value="CCD31351.1"/>
    <property type="molecule type" value="Genomic_DNA"/>
</dbReference>
<dbReference type="RefSeq" id="XP_004001697.1">
    <property type="nucleotide sequence ID" value="XM_004001648.1"/>
</dbReference>
<dbReference type="PaxDb" id="4896-SPBC1685.17.1"/>
<dbReference type="EnsemblFungi" id="SPBC1685.17.1">
    <property type="protein sequence ID" value="SPBC1685.17.1:pep"/>
    <property type="gene ID" value="SPBC1685.17"/>
</dbReference>
<dbReference type="PomBase" id="SPBC1685.17"/>
<dbReference type="VEuPathDB" id="FungiDB:SPBC1685.17"/>
<dbReference type="HOGENOM" id="CLU_2575232_0_0_1"/>
<dbReference type="InParanoid" id="G2TRS0"/>
<dbReference type="PRO" id="PR:G2TRS0"/>
<dbReference type="Proteomes" id="UP000002485">
    <property type="component" value="Chromosome II"/>
</dbReference>
<protein>
    <recommendedName>
        <fullName>Putative uncharacterized protein C1685.17</fullName>
    </recommendedName>
</protein>
<name>YH0H_SCHPO</name>
<gene>
    <name type="ORF">SPBC1685.17</name>
</gene>
<keyword id="KW-1185">Reference proteome</keyword>
<sequence length="81" mass="9541">MLSYGMPCHVLRRNTRILMKEKKKRLGIMFWQNVERRRCPETHSNEGASQGKRKRSERLKSVDFKKGVYCACACACTFQQE</sequence>